<protein>
    <recommendedName>
        <fullName evidence="1">Large ribosomal subunit protein bL35</fullName>
    </recommendedName>
    <alternativeName>
        <fullName evidence="3">50S ribosomal protein L35</fullName>
    </alternativeName>
</protein>
<accession>A0JV02</accession>
<keyword id="KW-1185">Reference proteome</keyword>
<keyword id="KW-0687">Ribonucleoprotein</keyword>
<keyword id="KW-0689">Ribosomal protein</keyword>
<dbReference type="EMBL" id="CP000454">
    <property type="protein sequence ID" value="ABK02872.1"/>
    <property type="molecule type" value="Genomic_DNA"/>
</dbReference>
<dbReference type="RefSeq" id="WP_009358635.1">
    <property type="nucleotide sequence ID" value="NC_008541.1"/>
</dbReference>
<dbReference type="SMR" id="A0JV02"/>
<dbReference type="STRING" id="290399.Arth_1478"/>
<dbReference type="GeneID" id="97421124"/>
<dbReference type="KEGG" id="art:Arth_1478"/>
<dbReference type="eggNOG" id="COG0291">
    <property type="taxonomic scope" value="Bacteria"/>
</dbReference>
<dbReference type="HOGENOM" id="CLU_169643_4_2_11"/>
<dbReference type="OrthoDB" id="9804851at2"/>
<dbReference type="Proteomes" id="UP000000754">
    <property type="component" value="Chromosome"/>
</dbReference>
<dbReference type="GO" id="GO:0022625">
    <property type="term" value="C:cytosolic large ribosomal subunit"/>
    <property type="evidence" value="ECO:0007669"/>
    <property type="project" value="TreeGrafter"/>
</dbReference>
<dbReference type="GO" id="GO:0003735">
    <property type="term" value="F:structural constituent of ribosome"/>
    <property type="evidence" value="ECO:0007669"/>
    <property type="project" value="InterPro"/>
</dbReference>
<dbReference type="GO" id="GO:0006412">
    <property type="term" value="P:translation"/>
    <property type="evidence" value="ECO:0007669"/>
    <property type="project" value="UniProtKB-UniRule"/>
</dbReference>
<dbReference type="FunFam" id="4.10.410.60:FF:000001">
    <property type="entry name" value="50S ribosomal protein L35"/>
    <property type="match status" value="1"/>
</dbReference>
<dbReference type="Gene3D" id="4.10.410.60">
    <property type="match status" value="1"/>
</dbReference>
<dbReference type="HAMAP" id="MF_00514">
    <property type="entry name" value="Ribosomal_bL35"/>
    <property type="match status" value="1"/>
</dbReference>
<dbReference type="InterPro" id="IPR001706">
    <property type="entry name" value="Ribosomal_bL35"/>
</dbReference>
<dbReference type="InterPro" id="IPR021137">
    <property type="entry name" value="Ribosomal_bL35-like"/>
</dbReference>
<dbReference type="InterPro" id="IPR018265">
    <property type="entry name" value="Ribosomal_bL35_CS"/>
</dbReference>
<dbReference type="InterPro" id="IPR037229">
    <property type="entry name" value="Ribosomal_bL35_sf"/>
</dbReference>
<dbReference type="NCBIfam" id="TIGR00001">
    <property type="entry name" value="rpmI_bact"/>
    <property type="match status" value="1"/>
</dbReference>
<dbReference type="PANTHER" id="PTHR33343">
    <property type="entry name" value="54S RIBOSOMAL PROTEIN BL35M"/>
    <property type="match status" value="1"/>
</dbReference>
<dbReference type="PANTHER" id="PTHR33343:SF1">
    <property type="entry name" value="LARGE RIBOSOMAL SUBUNIT PROTEIN BL35M"/>
    <property type="match status" value="1"/>
</dbReference>
<dbReference type="Pfam" id="PF01632">
    <property type="entry name" value="Ribosomal_L35p"/>
    <property type="match status" value="1"/>
</dbReference>
<dbReference type="PRINTS" id="PR00064">
    <property type="entry name" value="RIBOSOMALL35"/>
</dbReference>
<dbReference type="SUPFAM" id="SSF143034">
    <property type="entry name" value="L35p-like"/>
    <property type="match status" value="1"/>
</dbReference>
<dbReference type="PROSITE" id="PS00936">
    <property type="entry name" value="RIBOSOMAL_L35"/>
    <property type="match status" value="1"/>
</dbReference>
<organism>
    <name type="scientific">Arthrobacter sp. (strain FB24)</name>
    <dbReference type="NCBI Taxonomy" id="290399"/>
    <lineage>
        <taxon>Bacteria</taxon>
        <taxon>Bacillati</taxon>
        <taxon>Actinomycetota</taxon>
        <taxon>Actinomycetes</taxon>
        <taxon>Micrococcales</taxon>
        <taxon>Micrococcaceae</taxon>
        <taxon>Arthrobacter</taxon>
    </lineage>
</organism>
<proteinExistence type="inferred from homology"/>
<comment type="similarity">
    <text evidence="1">Belongs to the bacterial ribosomal protein bL35 family.</text>
</comment>
<evidence type="ECO:0000255" key="1">
    <source>
        <dbReference type="HAMAP-Rule" id="MF_00514"/>
    </source>
</evidence>
<evidence type="ECO:0000256" key="2">
    <source>
        <dbReference type="SAM" id="MobiDB-lite"/>
    </source>
</evidence>
<evidence type="ECO:0000305" key="3"/>
<feature type="chain" id="PRO_1000050655" description="Large ribosomal subunit protein bL35">
    <location>
        <begin position="1"/>
        <end position="64"/>
    </location>
</feature>
<feature type="region of interest" description="Disordered" evidence="2">
    <location>
        <begin position="1"/>
        <end position="29"/>
    </location>
</feature>
<name>RL35_ARTS2</name>
<gene>
    <name evidence="1" type="primary">rpmI</name>
    <name type="ordered locus">Arth_1478</name>
</gene>
<sequence length="64" mass="7418">MPKMKTHSGAKKRFKLTGSGKLRRQQANRRHYLEHKSSRLTRRLAGDKIVFKGDAKVIRKMLGI</sequence>
<reference key="1">
    <citation type="journal article" date="2013" name="Stand. Genomic Sci.">
        <title>Complete genome sequence of Arthrobacter sp. strain FB24.</title>
        <authorList>
            <person name="Nakatsu C.H."/>
            <person name="Barabote R."/>
            <person name="Thompson S."/>
            <person name="Bruce D."/>
            <person name="Detter C."/>
            <person name="Brettin T."/>
            <person name="Han C."/>
            <person name="Beasley F."/>
            <person name="Chen W."/>
            <person name="Konopka A."/>
            <person name="Xie G."/>
        </authorList>
    </citation>
    <scope>NUCLEOTIDE SEQUENCE [LARGE SCALE GENOMIC DNA]</scope>
    <source>
        <strain>FB24</strain>
    </source>
</reference>